<sequence length="198" mass="23077">MQLKTEVFLVEKEILVYIQTKSIGIEDNSIKLKMTPLLKKFANIGDKVYLKHSTFMLPTKIKAKKEDEVLLEFPSLTPEKPLGDRRNVRVLSDPENPVKVRFNEITKEVYDISEVGFSIKCGMEEIDEILKNKEISEVEIYLPNLEEWIKGSARLVNVREFENGDILCGYELFLDTPDEVKVRFYIYERVKEILKGEK</sequence>
<evidence type="ECO:0000305" key="1"/>
<organism>
    <name type="scientific">Aquifex aeolicus (strain VF5)</name>
    <dbReference type="NCBI Taxonomy" id="224324"/>
    <lineage>
        <taxon>Bacteria</taxon>
        <taxon>Pseudomonadati</taxon>
        <taxon>Aquificota</taxon>
        <taxon>Aquificia</taxon>
        <taxon>Aquificales</taxon>
        <taxon>Aquificaceae</taxon>
        <taxon>Aquifex</taxon>
    </lineage>
</organism>
<name>Y820_AQUAE</name>
<protein>
    <recommendedName>
        <fullName>Uncharacterized protein aq_820</fullName>
    </recommendedName>
</protein>
<gene>
    <name type="ordered locus">aq_820</name>
</gene>
<comment type="similarity">
    <text evidence="1">To A.aeolicus aq_1211 and aq_1583.</text>
</comment>
<dbReference type="EMBL" id="AE000657">
    <property type="protein sequence ID" value="AAC06969.1"/>
    <property type="molecule type" value="Genomic_DNA"/>
</dbReference>
<dbReference type="PIR" id="F70371">
    <property type="entry name" value="F70371"/>
</dbReference>
<dbReference type="RefSeq" id="NP_213562.1">
    <property type="nucleotide sequence ID" value="NC_000918.1"/>
</dbReference>
<dbReference type="RefSeq" id="WP_010880500.1">
    <property type="nucleotide sequence ID" value="NC_000918.1"/>
</dbReference>
<dbReference type="SMR" id="O67001"/>
<dbReference type="EnsemblBacteria" id="AAC06969">
    <property type="protein sequence ID" value="AAC06969"/>
    <property type="gene ID" value="aq_820"/>
</dbReference>
<dbReference type="KEGG" id="aae:aq_820"/>
<dbReference type="HOGENOM" id="CLU_1375737_0_0_0"/>
<dbReference type="InParanoid" id="O67001"/>
<dbReference type="OrthoDB" id="13345at2"/>
<dbReference type="Proteomes" id="UP000000798">
    <property type="component" value="Chromosome"/>
</dbReference>
<dbReference type="Gene3D" id="2.40.10.220">
    <property type="entry name" value="predicted glycosyltransferase like domains"/>
    <property type="match status" value="1"/>
</dbReference>
<reference key="1">
    <citation type="journal article" date="1998" name="Nature">
        <title>The complete genome of the hyperthermophilic bacterium Aquifex aeolicus.</title>
        <authorList>
            <person name="Deckert G."/>
            <person name="Warren P.V."/>
            <person name="Gaasterland T."/>
            <person name="Young W.G."/>
            <person name="Lenox A.L."/>
            <person name="Graham D.E."/>
            <person name="Overbeek R."/>
            <person name="Snead M.A."/>
            <person name="Keller M."/>
            <person name="Aujay M."/>
            <person name="Huber R."/>
            <person name="Feldman R.A."/>
            <person name="Short J.M."/>
            <person name="Olsen G.J."/>
            <person name="Swanson R.V."/>
        </authorList>
    </citation>
    <scope>NUCLEOTIDE SEQUENCE [LARGE SCALE GENOMIC DNA]</scope>
    <source>
        <strain>VF5</strain>
    </source>
</reference>
<feature type="chain" id="PRO_0000186883" description="Uncharacterized protein aq_820">
    <location>
        <begin position="1"/>
        <end position="198"/>
    </location>
</feature>
<proteinExistence type="predicted"/>
<keyword id="KW-1185">Reference proteome</keyword>
<accession>O67001</accession>